<protein>
    <recommendedName>
        <fullName evidence="1">Ribonuclease P protein component</fullName>
        <shortName evidence="1">RNase P protein</shortName>
        <shortName evidence="1">RNaseP protein</shortName>
        <ecNumber evidence="1">3.1.26.5</ecNumber>
    </recommendedName>
    <alternativeName>
        <fullName evidence="1">Protein C5</fullName>
    </alternativeName>
</protein>
<proteinExistence type="inferred from homology"/>
<name>RNPA_LISMC</name>
<gene>
    <name evidence="1" type="primary">rnpA</name>
    <name type="ordered locus">Lm4b_02827</name>
</gene>
<accession>C1L0I8</accession>
<evidence type="ECO:0000255" key="1">
    <source>
        <dbReference type="HAMAP-Rule" id="MF_00227"/>
    </source>
</evidence>
<sequence>MKKKYRIKKNDDFQKVFRRGKSFANRQFVVYTLKQEGSNHFRIGLSVSKKIGNAVCRNRIKRYIRQSFHELESQINPENEYIIIARKPAANMDFHEVKKSLIHVLKVGRVLKQKPNNSK</sequence>
<feature type="chain" id="PRO_1000204350" description="Ribonuclease P protein component">
    <location>
        <begin position="1"/>
        <end position="119"/>
    </location>
</feature>
<comment type="function">
    <text evidence="1">RNaseP catalyzes the removal of the 5'-leader sequence from pre-tRNA to produce the mature 5'-terminus. It can also cleave other RNA substrates such as 4.5S RNA. The protein component plays an auxiliary but essential role in vivo by binding to the 5'-leader sequence and broadening the substrate specificity of the ribozyme.</text>
</comment>
<comment type="catalytic activity">
    <reaction evidence="1">
        <text>Endonucleolytic cleavage of RNA, removing 5'-extranucleotides from tRNA precursor.</text>
        <dbReference type="EC" id="3.1.26.5"/>
    </reaction>
</comment>
<comment type="subunit">
    <text evidence="1">Consists of a catalytic RNA component (M1 or rnpB) and a protein subunit.</text>
</comment>
<comment type="similarity">
    <text evidence="1">Belongs to the RnpA family.</text>
</comment>
<keyword id="KW-0255">Endonuclease</keyword>
<keyword id="KW-0378">Hydrolase</keyword>
<keyword id="KW-0540">Nuclease</keyword>
<keyword id="KW-0694">RNA-binding</keyword>
<keyword id="KW-0819">tRNA processing</keyword>
<organism>
    <name type="scientific">Listeria monocytogenes serotype 4b (strain CLIP80459)</name>
    <dbReference type="NCBI Taxonomy" id="568819"/>
    <lineage>
        <taxon>Bacteria</taxon>
        <taxon>Bacillati</taxon>
        <taxon>Bacillota</taxon>
        <taxon>Bacilli</taxon>
        <taxon>Bacillales</taxon>
        <taxon>Listeriaceae</taxon>
        <taxon>Listeria</taxon>
    </lineage>
</organism>
<dbReference type="EC" id="3.1.26.5" evidence="1"/>
<dbReference type="EMBL" id="FM242711">
    <property type="protein sequence ID" value="CAS06581.1"/>
    <property type="molecule type" value="Genomic_DNA"/>
</dbReference>
<dbReference type="RefSeq" id="WP_003723727.1">
    <property type="nucleotide sequence ID" value="NC_012488.1"/>
</dbReference>
<dbReference type="SMR" id="C1L0I8"/>
<dbReference type="KEGG" id="lmc:Lm4b_02827"/>
<dbReference type="HOGENOM" id="CLU_117179_9_1_9"/>
<dbReference type="GO" id="GO:0030677">
    <property type="term" value="C:ribonuclease P complex"/>
    <property type="evidence" value="ECO:0007669"/>
    <property type="project" value="TreeGrafter"/>
</dbReference>
<dbReference type="GO" id="GO:0042781">
    <property type="term" value="F:3'-tRNA processing endoribonuclease activity"/>
    <property type="evidence" value="ECO:0007669"/>
    <property type="project" value="TreeGrafter"/>
</dbReference>
<dbReference type="GO" id="GO:0004526">
    <property type="term" value="F:ribonuclease P activity"/>
    <property type="evidence" value="ECO:0007669"/>
    <property type="project" value="UniProtKB-UniRule"/>
</dbReference>
<dbReference type="GO" id="GO:0000049">
    <property type="term" value="F:tRNA binding"/>
    <property type="evidence" value="ECO:0007669"/>
    <property type="project" value="UniProtKB-UniRule"/>
</dbReference>
<dbReference type="GO" id="GO:0001682">
    <property type="term" value="P:tRNA 5'-leader removal"/>
    <property type="evidence" value="ECO:0007669"/>
    <property type="project" value="UniProtKB-UniRule"/>
</dbReference>
<dbReference type="FunFam" id="3.30.230.10:FF:000021">
    <property type="entry name" value="Ribonuclease P protein component"/>
    <property type="match status" value="1"/>
</dbReference>
<dbReference type="Gene3D" id="3.30.230.10">
    <property type="match status" value="1"/>
</dbReference>
<dbReference type="HAMAP" id="MF_00227">
    <property type="entry name" value="RNase_P"/>
    <property type="match status" value="1"/>
</dbReference>
<dbReference type="InterPro" id="IPR020568">
    <property type="entry name" value="Ribosomal_Su5_D2-typ_SF"/>
</dbReference>
<dbReference type="InterPro" id="IPR014721">
    <property type="entry name" value="Ribsml_uS5_D2-typ_fold_subgr"/>
</dbReference>
<dbReference type="InterPro" id="IPR000100">
    <property type="entry name" value="RNase_P"/>
</dbReference>
<dbReference type="InterPro" id="IPR020539">
    <property type="entry name" value="RNase_P_CS"/>
</dbReference>
<dbReference type="NCBIfam" id="TIGR00188">
    <property type="entry name" value="rnpA"/>
    <property type="match status" value="1"/>
</dbReference>
<dbReference type="PANTHER" id="PTHR33992">
    <property type="entry name" value="RIBONUCLEASE P PROTEIN COMPONENT"/>
    <property type="match status" value="1"/>
</dbReference>
<dbReference type="PANTHER" id="PTHR33992:SF1">
    <property type="entry name" value="RIBONUCLEASE P PROTEIN COMPONENT"/>
    <property type="match status" value="1"/>
</dbReference>
<dbReference type="Pfam" id="PF00825">
    <property type="entry name" value="Ribonuclease_P"/>
    <property type="match status" value="1"/>
</dbReference>
<dbReference type="SUPFAM" id="SSF54211">
    <property type="entry name" value="Ribosomal protein S5 domain 2-like"/>
    <property type="match status" value="1"/>
</dbReference>
<dbReference type="PROSITE" id="PS00648">
    <property type="entry name" value="RIBONUCLEASE_P"/>
    <property type="match status" value="1"/>
</dbReference>
<reference key="1">
    <citation type="journal article" date="2012" name="BMC Genomics">
        <title>Comparative genomics and transcriptomics of lineages I, II, and III strains of Listeria monocytogenes.</title>
        <authorList>
            <person name="Hain T."/>
            <person name="Ghai R."/>
            <person name="Billion A."/>
            <person name="Kuenne C.T."/>
            <person name="Steinweg C."/>
            <person name="Izar B."/>
            <person name="Mohamed W."/>
            <person name="Mraheil M."/>
            <person name="Domann E."/>
            <person name="Schaffrath S."/>
            <person name="Karst U."/>
            <person name="Goesmann A."/>
            <person name="Oehm S."/>
            <person name="Puhler A."/>
            <person name="Merkl R."/>
            <person name="Vorwerk S."/>
            <person name="Glaser P."/>
            <person name="Garrido P."/>
            <person name="Rusniok C."/>
            <person name="Buchrieser C."/>
            <person name="Goebel W."/>
            <person name="Chakraborty T."/>
        </authorList>
    </citation>
    <scope>NUCLEOTIDE SEQUENCE [LARGE SCALE GENOMIC DNA]</scope>
    <source>
        <strain>CLIP80459</strain>
    </source>
</reference>